<proteinExistence type="inferred from homology"/>
<feature type="chain" id="PRO_0000162851" description="Thiazole synthase">
    <location>
        <begin position="1"/>
        <end position="257"/>
    </location>
</feature>
<feature type="active site" description="Schiff-base intermediate with DXP" evidence="1">
    <location>
        <position position="96"/>
    </location>
</feature>
<feature type="binding site" evidence="1">
    <location>
        <position position="157"/>
    </location>
    <ligand>
        <name>1-deoxy-D-xylulose 5-phosphate</name>
        <dbReference type="ChEBI" id="CHEBI:57792"/>
    </ligand>
</feature>
<feature type="binding site" evidence="1">
    <location>
        <begin position="184"/>
        <end position="185"/>
    </location>
    <ligand>
        <name>1-deoxy-D-xylulose 5-phosphate</name>
        <dbReference type="ChEBI" id="CHEBI:57792"/>
    </ligand>
</feature>
<feature type="binding site" evidence="1">
    <location>
        <begin position="206"/>
        <end position="207"/>
    </location>
    <ligand>
        <name>1-deoxy-D-xylulose 5-phosphate</name>
        <dbReference type="ChEBI" id="CHEBI:57792"/>
    </ligand>
</feature>
<name>THIG_RHIME</name>
<keyword id="KW-0963">Cytoplasm</keyword>
<keyword id="KW-0614">Plasmid</keyword>
<keyword id="KW-1185">Reference proteome</keyword>
<keyword id="KW-0704">Schiff base</keyword>
<keyword id="KW-0784">Thiamine biosynthesis</keyword>
<keyword id="KW-0808">Transferase</keyword>
<organism>
    <name type="scientific">Rhizobium meliloti (strain 1021)</name>
    <name type="common">Ensifer meliloti</name>
    <name type="synonym">Sinorhizobium meliloti</name>
    <dbReference type="NCBI Taxonomy" id="266834"/>
    <lineage>
        <taxon>Bacteria</taxon>
        <taxon>Pseudomonadati</taxon>
        <taxon>Pseudomonadota</taxon>
        <taxon>Alphaproteobacteria</taxon>
        <taxon>Hyphomicrobiales</taxon>
        <taxon>Rhizobiaceae</taxon>
        <taxon>Sinorhizobium/Ensifer group</taxon>
        <taxon>Sinorhizobium</taxon>
    </lineage>
</organism>
<comment type="function">
    <text evidence="1">Catalyzes the rearrangement of 1-deoxy-D-xylulose 5-phosphate (DXP) to produce the thiazole phosphate moiety of thiamine. Sulfur is provided by the thiocarboxylate moiety of the carrier protein ThiS. In vitro, sulfur can be provided by H(2)S.</text>
</comment>
<comment type="catalytic activity">
    <reaction evidence="1">
        <text>[ThiS sulfur-carrier protein]-C-terminal-Gly-aminoethanethioate + 2-iminoacetate + 1-deoxy-D-xylulose 5-phosphate = [ThiS sulfur-carrier protein]-C-terminal Gly-Gly + 2-[(2R,5Z)-2-carboxy-4-methylthiazol-5(2H)-ylidene]ethyl phosphate + 2 H2O + H(+)</text>
        <dbReference type="Rhea" id="RHEA:26297"/>
        <dbReference type="Rhea" id="RHEA-COMP:12909"/>
        <dbReference type="Rhea" id="RHEA-COMP:19908"/>
        <dbReference type="ChEBI" id="CHEBI:15377"/>
        <dbReference type="ChEBI" id="CHEBI:15378"/>
        <dbReference type="ChEBI" id="CHEBI:57792"/>
        <dbReference type="ChEBI" id="CHEBI:62899"/>
        <dbReference type="ChEBI" id="CHEBI:77846"/>
        <dbReference type="ChEBI" id="CHEBI:90778"/>
        <dbReference type="ChEBI" id="CHEBI:232372"/>
        <dbReference type="EC" id="2.8.1.10"/>
    </reaction>
</comment>
<comment type="pathway">
    <text evidence="1">Cofactor biosynthesis; thiamine diphosphate biosynthesis.</text>
</comment>
<comment type="subunit">
    <text evidence="1">Homotetramer. Forms heterodimers with either ThiH or ThiS.</text>
</comment>
<comment type="subcellular location">
    <subcellularLocation>
        <location evidence="1">Cytoplasm</location>
    </subcellularLocation>
</comment>
<comment type="similarity">
    <text evidence="1">Belongs to the ThiG family.</text>
</comment>
<evidence type="ECO:0000255" key="1">
    <source>
        <dbReference type="HAMAP-Rule" id="MF_00443"/>
    </source>
</evidence>
<accession>P58264</accession>
<protein>
    <recommendedName>
        <fullName evidence="1">Thiazole synthase</fullName>
        <ecNumber evidence="1">2.8.1.10</ecNumber>
    </recommendedName>
</protein>
<gene>
    <name evidence="1" type="primary">thiG</name>
    <name type="ordered locus">RB1530</name>
    <name type="ORF">SMb20617</name>
</gene>
<geneLocation type="plasmid">
    <name>pSymB</name>
    <name>megaplasmid 2</name>
</geneLocation>
<dbReference type="EC" id="2.8.1.10" evidence="1"/>
<dbReference type="EMBL" id="AL591985">
    <property type="protein sequence ID" value="CAC49929.1"/>
    <property type="molecule type" value="Genomic_DNA"/>
</dbReference>
<dbReference type="PIR" id="A96033">
    <property type="entry name" value="A96033"/>
</dbReference>
<dbReference type="RefSeq" id="NP_438069.1">
    <property type="nucleotide sequence ID" value="NC_003078.1"/>
</dbReference>
<dbReference type="RefSeq" id="WP_003529413.1">
    <property type="nucleotide sequence ID" value="NC_003078.1"/>
</dbReference>
<dbReference type="SMR" id="P58264"/>
<dbReference type="EnsemblBacteria" id="CAC49929">
    <property type="protein sequence ID" value="CAC49929"/>
    <property type="gene ID" value="SM_b20617"/>
</dbReference>
<dbReference type="KEGG" id="sme:SM_b20617"/>
<dbReference type="PATRIC" id="fig|266834.11.peg.6455"/>
<dbReference type="eggNOG" id="COG2022">
    <property type="taxonomic scope" value="Bacteria"/>
</dbReference>
<dbReference type="HOGENOM" id="CLU_062233_1_0_5"/>
<dbReference type="OrthoDB" id="9805935at2"/>
<dbReference type="UniPathway" id="UPA00060"/>
<dbReference type="Proteomes" id="UP000001976">
    <property type="component" value="Plasmid pSymB"/>
</dbReference>
<dbReference type="GO" id="GO:0005737">
    <property type="term" value="C:cytoplasm"/>
    <property type="evidence" value="ECO:0007669"/>
    <property type="project" value="UniProtKB-SubCell"/>
</dbReference>
<dbReference type="GO" id="GO:1990107">
    <property type="term" value="F:thiazole synthase activity"/>
    <property type="evidence" value="ECO:0007669"/>
    <property type="project" value="UniProtKB-EC"/>
</dbReference>
<dbReference type="GO" id="GO:0009229">
    <property type="term" value="P:thiamine diphosphate biosynthetic process"/>
    <property type="evidence" value="ECO:0007669"/>
    <property type="project" value="UniProtKB-UniRule"/>
</dbReference>
<dbReference type="CDD" id="cd04728">
    <property type="entry name" value="ThiG"/>
    <property type="match status" value="1"/>
</dbReference>
<dbReference type="Gene3D" id="3.20.20.70">
    <property type="entry name" value="Aldolase class I"/>
    <property type="match status" value="1"/>
</dbReference>
<dbReference type="HAMAP" id="MF_00443">
    <property type="entry name" value="ThiG"/>
    <property type="match status" value="1"/>
</dbReference>
<dbReference type="InterPro" id="IPR013785">
    <property type="entry name" value="Aldolase_TIM"/>
</dbReference>
<dbReference type="InterPro" id="IPR033983">
    <property type="entry name" value="Thiazole_synthase_ThiG"/>
</dbReference>
<dbReference type="InterPro" id="IPR008867">
    <property type="entry name" value="ThiG"/>
</dbReference>
<dbReference type="PANTHER" id="PTHR34266">
    <property type="entry name" value="THIAZOLE SYNTHASE"/>
    <property type="match status" value="1"/>
</dbReference>
<dbReference type="PANTHER" id="PTHR34266:SF2">
    <property type="entry name" value="THIAZOLE SYNTHASE"/>
    <property type="match status" value="1"/>
</dbReference>
<dbReference type="Pfam" id="PF05690">
    <property type="entry name" value="ThiG"/>
    <property type="match status" value="1"/>
</dbReference>
<dbReference type="SUPFAM" id="SSF110399">
    <property type="entry name" value="ThiG-like"/>
    <property type="match status" value="1"/>
</dbReference>
<reference key="1">
    <citation type="journal article" date="2001" name="Proc. Natl. Acad. Sci. U.S.A.">
        <title>The complete sequence of the 1,683-kb pSymB megaplasmid from the N2-fixing endosymbiont Sinorhizobium meliloti.</title>
        <authorList>
            <person name="Finan T.M."/>
            <person name="Weidner S."/>
            <person name="Wong K."/>
            <person name="Buhrmester J."/>
            <person name="Chain P."/>
            <person name="Vorhoelter F.J."/>
            <person name="Hernandez-Lucas I."/>
            <person name="Becker A."/>
            <person name="Cowie A."/>
            <person name="Gouzy J."/>
            <person name="Golding B."/>
            <person name="Puehler A."/>
        </authorList>
    </citation>
    <scope>NUCLEOTIDE SEQUENCE [LARGE SCALE GENOMIC DNA]</scope>
    <source>
        <strain>1021</strain>
    </source>
</reference>
<reference key="2">
    <citation type="journal article" date="2001" name="Science">
        <title>The composite genome of the legume symbiont Sinorhizobium meliloti.</title>
        <authorList>
            <person name="Galibert F."/>
            <person name="Finan T.M."/>
            <person name="Long S.R."/>
            <person name="Puehler A."/>
            <person name="Abola P."/>
            <person name="Ampe F."/>
            <person name="Barloy-Hubler F."/>
            <person name="Barnett M.J."/>
            <person name="Becker A."/>
            <person name="Boistard P."/>
            <person name="Bothe G."/>
            <person name="Boutry M."/>
            <person name="Bowser L."/>
            <person name="Buhrmester J."/>
            <person name="Cadieu E."/>
            <person name="Capela D."/>
            <person name="Chain P."/>
            <person name="Cowie A."/>
            <person name="Davis R.W."/>
            <person name="Dreano S."/>
            <person name="Federspiel N.A."/>
            <person name="Fisher R.F."/>
            <person name="Gloux S."/>
            <person name="Godrie T."/>
            <person name="Goffeau A."/>
            <person name="Golding B."/>
            <person name="Gouzy J."/>
            <person name="Gurjal M."/>
            <person name="Hernandez-Lucas I."/>
            <person name="Hong A."/>
            <person name="Huizar L."/>
            <person name="Hyman R.W."/>
            <person name="Jones T."/>
            <person name="Kahn D."/>
            <person name="Kahn M.L."/>
            <person name="Kalman S."/>
            <person name="Keating D.H."/>
            <person name="Kiss E."/>
            <person name="Komp C."/>
            <person name="Lelaure V."/>
            <person name="Masuy D."/>
            <person name="Palm C."/>
            <person name="Peck M.C."/>
            <person name="Pohl T.M."/>
            <person name="Portetelle D."/>
            <person name="Purnelle B."/>
            <person name="Ramsperger U."/>
            <person name="Surzycki R."/>
            <person name="Thebault P."/>
            <person name="Vandenbol M."/>
            <person name="Vorhoelter F.J."/>
            <person name="Weidner S."/>
            <person name="Wells D.H."/>
            <person name="Wong K."/>
            <person name="Yeh K.-C."/>
            <person name="Batut J."/>
        </authorList>
    </citation>
    <scope>NUCLEOTIDE SEQUENCE [LARGE SCALE GENOMIC DNA]</scope>
    <source>
        <strain>1021</strain>
    </source>
</reference>
<sequence length="257" mass="27241">MPLFYETEVRSRLLLGTARYPSPAVLAEAVRRSGTDIVTVSLRRETAGGRQGGAFFELIRELGVRVLPNTAGCHSVSEAVLTARMAREVFGTDWIKLEVIGHQDTLQPDVFGLVEGARILTGEGFQVFPYTTDDLVVAERLLEAGCQVLMPWCAPIGSAMGPQNVQGLRAMRAEFPDVPLIVDAGIGRPSHATTVMELGYDAVLLNTAVAGAADPAAMAEAFTKAIDAGHAAHGAGMLEPRDMAVPSTPVIGKAVFS</sequence>